<feature type="chain" id="PRO_0000089723" description="Nuclear apoptosis-inducing factor 1">
    <location>
        <begin position="1"/>
        <end position="330"/>
    </location>
</feature>
<feature type="region of interest" description="Required for nuclear localization and apoptosis-inducing activity" evidence="1">
    <location>
        <begin position="1"/>
        <end position="74"/>
    </location>
</feature>
<feature type="region of interest" description="Disordered" evidence="2">
    <location>
        <begin position="92"/>
        <end position="117"/>
    </location>
</feature>
<feature type="region of interest" description="Disordered" evidence="2">
    <location>
        <begin position="147"/>
        <end position="175"/>
    </location>
</feature>
<feature type="region of interest" description="Disordered" evidence="2">
    <location>
        <begin position="309"/>
        <end position="330"/>
    </location>
</feature>
<feature type="compositionally biased region" description="Gly residues" evidence="2">
    <location>
        <begin position="95"/>
        <end position="108"/>
    </location>
</feature>
<protein>
    <recommendedName>
        <fullName>Nuclear apoptosis-inducing factor 1</fullName>
    </recommendedName>
</protein>
<reference key="1">
    <citation type="journal article" date="2005" name="Genome Biol.">
        <title>Full-length cDNAs from chicken bursal lymphocytes to facilitate gene function analysis.</title>
        <authorList>
            <person name="Caldwell R.B."/>
            <person name="Kierzek A.M."/>
            <person name="Arakawa H."/>
            <person name="Bezzubov Y."/>
            <person name="Zaim J."/>
            <person name="Fiedler P."/>
            <person name="Kutter S."/>
            <person name="Blagodatski A."/>
            <person name="Kostovska D."/>
            <person name="Koter M."/>
            <person name="Plachy J."/>
            <person name="Carninci P."/>
            <person name="Hayashizaki Y."/>
            <person name="Buerstedde J.-M."/>
        </authorList>
    </citation>
    <scope>NUCLEOTIDE SEQUENCE [LARGE SCALE MRNA]</scope>
    <source>
        <strain>CB</strain>
        <tissue>Bursa of Fabricius</tissue>
    </source>
</reference>
<evidence type="ECO:0000250" key="1"/>
<evidence type="ECO:0000256" key="2">
    <source>
        <dbReference type="SAM" id="MobiDB-lite"/>
    </source>
</evidence>
<evidence type="ECO:0000305" key="3"/>
<keyword id="KW-0053">Apoptosis</keyword>
<keyword id="KW-0539">Nucleus</keyword>
<keyword id="KW-1185">Reference proteome</keyword>
<dbReference type="EMBL" id="AJ720957">
    <property type="protein sequence ID" value="CAG32616.1"/>
    <property type="molecule type" value="mRNA"/>
</dbReference>
<dbReference type="FunCoup" id="Q5ZI27">
    <property type="interactions" value="759"/>
</dbReference>
<dbReference type="STRING" id="9031.ENSGALP00000041923"/>
<dbReference type="GlyGen" id="Q5ZI27">
    <property type="glycosylation" value="1 site"/>
</dbReference>
<dbReference type="PaxDb" id="9031-ENSGALP00000041923"/>
<dbReference type="VEuPathDB" id="HostDB:geneid_417229"/>
<dbReference type="eggNOG" id="ENOG502QW9U">
    <property type="taxonomic scope" value="Eukaryota"/>
</dbReference>
<dbReference type="InParanoid" id="Q5ZI27"/>
<dbReference type="OrthoDB" id="9039237at2759"/>
<dbReference type="PhylomeDB" id="Q5ZI27"/>
<dbReference type="PRO" id="PR:Q5ZI27"/>
<dbReference type="Proteomes" id="UP000000539">
    <property type="component" value="Unassembled WGS sequence"/>
</dbReference>
<dbReference type="GO" id="GO:0000801">
    <property type="term" value="C:central element"/>
    <property type="evidence" value="ECO:0000318"/>
    <property type="project" value="GO_Central"/>
</dbReference>
<dbReference type="GO" id="GO:0005739">
    <property type="term" value="C:mitochondrion"/>
    <property type="evidence" value="ECO:0007669"/>
    <property type="project" value="GOC"/>
</dbReference>
<dbReference type="GO" id="GO:0005634">
    <property type="term" value="C:nucleus"/>
    <property type="evidence" value="ECO:0000250"/>
    <property type="project" value="UniProtKB"/>
</dbReference>
<dbReference type="GO" id="GO:0007129">
    <property type="term" value="P:homologous chromosome pairing at meiosis"/>
    <property type="evidence" value="ECO:0000318"/>
    <property type="project" value="GO_Central"/>
</dbReference>
<dbReference type="GO" id="GO:0010705">
    <property type="term" value="P:meiotic DNA double-strand break processing involved in reciprocal meiotic recombination"/>
    <property type="evidence" value="ECO:0000318"/>
    <property type="project" value="GO_Central"/>
</dbReference>
<dbReference type="GO" id="GO:0048477">
    <property type="term" value="P:oogenesis"/>
    <property type="evidence" value="ECO:0000318"/>
    <property type="project" value="GO_Central"/>
</dbReference>
<dbReference type="GO" id="GO:1902108">
    <property type="term" value="P:regulation of mitochondrial membrane permeability involved in apoptotic process"/>
    <property type="evidence" value="ECO:0000250"/>
    <property type="project" value="UniProtKB"/>
</dbReference>
<dbReference type="GO" id="GO:0007283">
    <property type="term" value="P:spermatogenesis"/>
    <property type="evidence" value="ECO:0000318"/>
    <property type="project" value="GO_Central"/>
</dbReference>
<dbReference type="InterPro" id="IPR028002">
    <property type="entry name" value="Myb_DNA-bind_5"/>
</dbReference>
<dbReference type="PANTHER" id="PTHR35449">
    <property type="entry name" value="PROTEIN SIX6OS1"/>
    <property type="match status" value="1"/>
</dbReference>
<dbReference type="PANTHER" id="PTHR35449:SF1">
    <property type="entry name" value="PROTEIN SIX6OS1"/>
    <property type="match status" value="1"/>
</dbReference>
<dbReference type="Pfam" id="PF13873">
    <property type="entry name" value="Myb_DNA-bind_5"/>
    <property type="match status" value="1"/>
</dbReference>
<name>NAIF1_CHICK</name>
<sequence>MASPPAPPAKKRKMNFSEREVEIIVEELERGKHLLINHFNAGVPLAAKAAAWHDILRRVNAVATCHRELPEVKKKWSDLKTEVRRKVAQVRAAMEGGGESQNGGGAGTEGEDPTGATAAPVILTPMQQRICNLLGEATIISLPSGDCGAGRRDRDPHHRLRHHRHADPGVSAAPSEVPAETTYHSLEDGVVEYCTTEAPTTVTAEAPLEMMAHQHEVSAKPQELKSRIALNSAKLLQEQRVTNLHVKEIAQHLEQQNDLLQMIRRSQEVQACAQERQAQAMEGTQAALSALIQVLRPMIKDFRRFLQSNTPSPSVTADPNQTGQQDGIIQ</sequence>
<comment type="function">
    <text evidence="1">Induces apoptosis.</text>
</comment>
<comment type="subcellular location">
    <subcellularLocation>
        <location evidence="1">Nucleus</location>
    </subcellularLocation>
</comment>
<comment type="similarity">
    <text evidence="3">Belongs to the NAIF1 family.</text>
</comment>
<accession>Q5ZI27</accession>
<organism>
    <name type="scientific">Gallus gallus</name>
    <name type="common">Chicken</name>
    <dbReference type="NCBI Taxonomy" id="9031"/>
    <lineage>
        <taxon>Eukaryota</taxon>
        <taxon>Metazoa</taxon>
        <taxon>Chordata</taxon>
        <taxon>Craniata</taxon>
        <taxon>Vertebrata</taxon>
        <taxon>Euteleostomi</taxon>
        <taxon>Archelosauria</taxon>
        <taxon>Archosauria</taxon>
        <taxon>Dinosauria</taxon>
        <taxon>Saurischia</taxon>
        <taxon>Theropoda</taxon>
        <taxon>Coelurosauria</taxon>
        <taxon>Aves</taxon>
        <taxon>Neognathae</taxon>
        <taxon>Galloanserae</taxon>
        <taxon>Galliformes</taxon>
        <taxon>Phasianidae</taxon>
        <taxon>Phasianinae</taxon>
        <taxon>Gallus</taxon>
    </lineage>
</organism>
<proteinExistence type="evidence at transcript level"/>
<gene>
    <name type="primary">NAIF1</name>
    <name type="ORF">RCJMB04_31b24</name>
</gene>